<reference key="1">
    <citation type="journal article" date="2009" name="J. Bacteriol.">
        <title>Complete and draft genome sequences of six members of the Aquificales.</title>
        <authorList>
            <person name="Reysenbach A.-L."/>
            <person name="Hamamura N."/>
            <person name="Podar M."/>
            <person name="Griffiths E."/>
            <person name="Ferreira S."/>
            <person name="Hochstein R."/>
            <person name="Heidelberg J."/>
            <person name="Johnson J."/>
            <person name="Mead D."/>
            <person name="Pohorille A."/>
            <person name="Sarmiento M."/>
            <person name="Schweighofer K."/>
            <person name="Seshadri R."/>
            <person name="Voytek M.A."/>
        </authorList>
    </citation>
    <scope>NUCLEOTIDE SEQUENCE [LARGE SCALE GENOMIC DNA]</scope>
    <source>
        <strain>Y04AAS1</strain>
    </source>
</reference>
<dbReference type="EMBL" id="CP001130">
    <property type="protein sequence ID" value="ACG57815.1"/>
    <property type="molecule type" value="Genomic_DNA"/>
</dbReference>
<dbReference type="RefSeq" id="WP_012514171.1">
    <property type="nucleotide sequence ID" value="NC_011126.1"/>
</dbReference>
<dbReference type="SMR" id="B4U9K4"/>
<dbReference type="STRING" id="380749.HY04AAS1_1129"/>
<dbReference type="KEGG" id="hya:HY04AAS1_1129"/>
<dbReference type="eggNOG" id="COG0268">
    <property type="taxonomic scope" value="Bacteria"/>
</dbReference>
<dbReference type="HOGENOM" id="CLU_160655_3_1_0"/>
<dbReference type="OrthoDB" id="9808392at2"/>
<dbReference type="GO" id="GO:0005829">
    <property type="term" value="C:cytosol"/>
    <property type="evidence" value="ECO:0007669"/>
    <property type="project" value="TreeGrafter"/>
</dbReference>
<dbReference type="GO" id="GO:0015935">
    <property type="term" value="C:small ribosomal subunit"/>
    <property type="evidence" value="ECO:0007669"/>
    <property type="project" value="TreeGrafter"/>
</dbReference>
<dbReference type="GO" id="GO:0070181">
    <property type="term" value="F:small ribosomal subunit rRNA binding"/>
    <property type="evidence" value="ECO:0007669"/>
    <property type="project" value="TreeGrafter"/>
</dbReference>
<dbReference type="GO" id="GO:0003735">
    <property type="term" value="F:structural constituent of ribosome"/>
    <property type="evidence" value="ECO:0007669"/>
    <property type="project" value="InterPro"/>
</dbReference>
<dbReference type="GO" id="GO:0006412">
    <property type="term" value="P:translation"/>
    <property type="evidence" value="ECO:0007669"/>
    <property type="project" value="UniProtKB-UniRule"/>
</dbReference>
<dbReference type="Gene3D" id="1.20.58.110">
    <property type="entry name" value="Ribosomal protein S20"/>
    <property type="match status" value="1"/>
</dbReference>
<dbReference type="HAMAP" id="MF_00500">
    <property type="entry name" value="Ribosomal_bS20"/>
    <property type="match status" value="1"/>
</dbReference>
<dbReference type="InterPro" id="IPR002583">
    <property type="entry name" value="Ribosomal_bS20"/>
</dbReference>
<dbReference type="InterPro" id="IPR036510">
    <property type="entry name" value="Ribosomal_bS20_sf"/>
</dbReference>
<dbReference type="NCBIfam" id="TIGR00029">
    <property type="entry name" value="S20"/>
    <property type="match status" value="1"/>
</dbReference>
<dbReference type="PANTHER" id="PTHR33398">
    <property type="entry name" value="30S RIBOSOMAL PROTEIN S20"/>
    <property type="match status" value="1"/>
</dbReference>
<dbReference type="PANTHER" id="PTHR33398:SF1">
    <property type="entry name" value="SMALL RIBOSOMAL SUBUNIT PROTEIN BS20C"/>
    <property type="match status" value="1"/>
</dbReference>
<dbReference type="Pfam" id="PF01649">
    <property type="entry name" value="Ribosomal_S20p"/>
    <property type="match status" value="1"/>
</dbReference>
<dbReference type="SUPFAM" id="SSF46992">
    <property type="entry name" value="Ribosomal protein S20"/>
    <property type="match status" value="1"/>
</dbReference>
<accession>B4U9K4</accession>
<keyword id="KW-0687">Ribonucleoprotein</keyword>
<keyword id="KW-0689">Ribosomal protein</keyword>
<keyword id="KW-0694">RNA-binding</keyword>
<keyword id="KW-0699">rRNA-binding</keyword>
<organism>
    <name type="scientific">Hydrogenobaculum sp. (strain Y04AAS1)</name>
    <dbReference type="NCBI Taxonomy" id="380749"/>
    <lineage>
        <taxon>Bacteria</taxon>
        <taxon>Pseudomonadati</taxon>
        <taxon>Aquificota</taxon>
        <taxon>Aquificia</taxon>
        <taxon>Aquificales</taxon>
        <taxon>Aquificaceae</taxon>
        <taxon>Hydrogenobaculum</taxon>
    </lineage>
</organism>
<protein>
    <recommendedName>
        <fullName evidence="1">Small ribosomal subunit protein bS20</fullName>
    </recommendedName>
    <alternativeName>
        <fullName evidence="2">30S ribosomal protein S20</fullName>
    </alternativeName>
</protein>
<name>RS20_HYDS0</name>
<gene>
    <name evidence="1" type="primary">rpsT</name>
    <name type="ordered locus">HY04AAS1_1129</name>
</gene>
<sequence length="93" mass="10640">MPNKRQAAKRARRDERRREINALHVSRMKTAIRNFKKLIQAKDLETAKAKLPFVVSMIQHAAAKGSIHKNEAARRVSRVTQLLNKALASNEQK</sequence>
<feature type="chain" id="PRO_1000126457" description="Small ribosomal subunit protein bS20">
    <location>
        <begin position="1"/>
        <end position="93"/>
    </location>
</feature>
<evidence type="ECO:0000255" key="1">
    <source>
        <dbReference type="HAMAP-Rule" id="MF_00500"/>
    </source>
</evidence>
<evidence type="ECO:0000305" key="2"/>
<comment type="function">
    <text evidence="1">Binds directly to 16S ribosomal RNA.</text>
</comment>
<comment type="similarity">
    <text evidence="1">Belongs to the bacterial ribosomal protein bS20 family.</text>
</comment>
<proteinExistence type="inferred from homology"/>